<reference key="1">
    <citation type="journal article" date="2009" name="J. Bacteriol.">
        <title>Role of conjugative elements in the evolution of the multidrug-resistant pandemic clone Streptococcus pneumoniae Spain23F ST81.</title>
        <authorList>
            <person name="Croucher N.J."/>
            <person name="Walker D."/>
            <person name="Romero P."/>
            <person name="Lennard N."/>
            <person name="Paterson G.K."/>
            <person name="Bason N.C."/>
            <person name="Mitchell A.M."/>
            <person name="Quail M.A."/>
            <person name="Andrew P.W."/>
            <person name="Parkhill J."/>
            <person name="Bentley S.D."/>
            <person name="Mitchell T.J."/>
        </authorList>
    </citation>
    <scope>NUCLEOTIDE SEQUENCE [LARGE SCALE GENOMIC DNA]</scope>
    <source>
        <strain>ATCC 700669 / Spain 23F-1</strain>
    </source>
</reference>
<comment type="function">
    <text evidence="1">GTPase that plays an essential role in the late steps of ribosome biogenesis.</text>
</comment>
<comment type="subunit">
    <text evidence="1">Associates with the 50S ribosomal subunit.</text>
</comment>
<comment type="similarity">
    <text evidence="1">Belongs to the TRAFAC class TrmE-Era-EngA-EngB-Septin-like GTPase superfamily. EngA (Der) GTPase family.</text>
</comment>
<sequence length="436" mass="49082">MALPTIAIVGRPNVGKSTLFNRIAGERISIVEDVEGVTRDRIYATGEWLNRSFSMIDTGGIDDVDAPFMEQIKHQAEIAMEEADVIVFVVSGKEGITDADEYVARKLYKTHKPVILAVNKVDNPEMRNDIYDFYALGLGEPLPISSVHGIGTGDVLDAIVENLPNEYEEENPDVIKFSLIGRPNVGKSSLINAILGEDRVIASPVAGTTRDAIDTHFTDTDGQEFTMIDTAGMRKSGKVYENTEKYSVMRAMRAIDRSDVVLMVINAEEGIREYDKRIAGFAHEAGKGMIIVVNKWDTLEKDNHTMKNWEEDIREQFQYLPYAPIIFVSALTKQRLHKLPEMIKQISESQNTRIPSAVLNDVIMDAIAINPTPTDKGKRLKIFYATQVATKPPTFVIFVNEEELMHFSYLRFLENQIRKAFVFEGTPIHLIARKRK</sequence>
<protein>
    <recommendedName>
        <fullName evidence="1">GTPase Der</fullName>
    </recommendedName>
    <alternativeName>
        <fullName evidence="1">GTP-binding protein EngA</fullName>
    </alternativeName>
</protein>
<evidence type="ECO:0000255" key="1">
    <source>
        <dbReference type="HAMAP-Rule" id="MF_00195"/>
    </source>
</evidence>
<accession>B8ZMH4</accession>
<feature type="chain" id="PRO_1000124373" description="GTPase Der">
    <location>
        <begin position="1"/>
        <end position="436"/>
    </location>
</feature>
<feature type="domain" description="EngA-type G 1">
    <location>
        <begin position="4"/>
        <end position="167"/>
    </location>
</feature>
<feature type="domain" description="EngA-type G 2">
    <location>
        <begin position="175"/>
        <end position="351"/>
    </location>
</feature>
<feature type="domain" description="KH-like" evidence="1">
    <location>
        <begin position="352"/>
        <end position="436"/>
    </location>
</feature>
<feature type="binding site" evidence="1">
    <location>
        <begin position="10"/>
        <end position="17"/>
    </location>
    <ligand>
        <name>GTP</name>
        <dbReference type="ChEBI" id="CHEBI:37565"/>
        <label>1</label>
    </ligand>
</feature>
<feature type="binding site" evidence="1">
    <location>
        <begin position="57"/>
        <end position="61"/>
    </location>
    <ligand>
        <name>GTP</name>
        <dbReference type="ChEBI" id="CHEBI:37565"/>
        <label>1</label>
    </ligand>
</feature>
<feature type="binding site" evidence="1">
    <location>
        <begin position="119"/>
        <end position="122"/>
    </location>
    <ligand>
        <name>GTP</name>
        <dbReference type="ChEBI" id="CHEBI:37565"/>
        <label>1</label>
    </ligand>
</feature>
<feature type="binding site" evidence="1">
    <location>
        <begin position="181"/>
        <end position="188"/>
    </location>
    <ligand>
        <name>GTP</name>
        <dbReference type="ChEBI" id="CHEBI:37565"/>
        <label>2</label>
    </ligand>
</feature>
<feature type="binding site" evidence="1">
    <location>
        <begin position="229"/>
        <end position="233"/>
    </location>
    <ligand>
        <name>GTP</name>
        <dbReference type="ChEBI" id="CHEBI:37565"/>
        <label>2</label>
    </ligand>
</feature>
<feature type="binding site" evidence="1">
    <location>
        <begin position="294"/>
        <end position="297"/>
    </location>
    <ligand>
        <name>GTP</name>
        <dbReference type="ChEBI" id="CHEBI:37565"/>
        <label>2</label>
    </ligand>
</feature>
<keyword id="KW-0342">GTP-binding</keyword>
<keyword id="KW-0547">Nucleotide-binding</keyword>
<keyword id="KW-0677">Repeat</keyword>
<keyword id="KW-0690">Ribosome biogenesis</keyword>
<organism>
    <name type="scientific">Streptococcus pneumoniae (strain ATCC 700669 / Spain 23F-1)</name>
    <dbReference type="NCBI Taxonomy" id="561276"/>
    <lineage>
        <taxon>Bacteria</taxon>
        <taxon>Bacillati</taxon>
        <taxon>Bacillota</taxon>
        <taxon>Bacilli</taxon>
        <taxon>Lactobacillales</taxon>
        <taxon>Streptococcaceae</taxon>
        <taxon>Streptococcus</taxon>
    </lineage>
</organism>
<gene>
    <name evidence="1" type="primary">der</name>
    <name type="synonym">engA</name>
    <name type="ordered locus">SPN23F17100</name>
</gene>
<dbReference type="EMBL" id="FM211187">
    <property type="protein sequence ID" value="CAR69481.1"/>
    <property type="molecule type" value="Genomic_DNA"/>
</dbReference>
<dbReference type="RefSeq" id="WP_001207696.1">
    <property type="nucleotide sequence ID" value="NC_011900.1"/>
</dbReference>
<dbReference type="SMR" id="B8ZMH4"/>
<dbReference type="GeneID" id="93740105"/>
<dbReference type="KEGG" id="sne:SPN23F17100"/>
<dbReference type="HOGENOM" id="CLU_016077_6_2_9"/>
<dbReference type="GO" id="GO:0005525">
    <property type="term" value="F:GTP binding"/>
    <property type="evidence" value="ECO:0007669"/>
    <property type="project" value="UniProtKB-UniRule"/>
</dbReference>
<dbReference type="GO" id="GO:0043022">
    <property type="term" value="F:ribosome binding"/>
    <property type="evidence" value="ECO:0007669"/>
    <property type="project" value="TreeGrafter"/>
</dbReference>
<dbReference type="GO" id="GO:0042254">
    <property type="term" value="P:ribosome biogenesis"/>
    <property type="evidence" value="ECO:0007669"/>
    <property type="project" value="UniProtKB-KW"/>
</dbReference>
<dbReference type="CDD" id="cd01894">
    <property type="entry name" value="EngA1"/>
    <property type="match status" value="1"/>
</dbReference>
<dbReference type="CDD" id="cd01895">
    <property type="entry name" value="EngA2"/>
    <property type="match status" value="1"/>
</dbReference>
<dbReference type="FunFam" id="3.30.300.20:FF:000004">
    <property type="entry name" value="GTPase Der"/>
    <property type="match status" value="1"/>
</dbReference>
<dbReference type="FunFam" id="3.40.50.300:FF:000040">
    <property type="entry name" value="GTPase Der"/>
    <property type="match status" value="1"/>
</dbReference>
<dbReference type="FunFam" id="3.40.50.300:FF:000057">
    <property type="entry name" value="GTPase Der"/>
    <property type="match status" value="1"/>
</dbReference>
<dbReference type="Gene3D" id="3.30.300.20">
    <property type="match status" value="1"/>
</dbReference>
<dbReference type="Gene3D" id="3.40.50.300">
    <property type="entry name" value="P-loop containing nucleotide triphosphate hydrolases"/>
    <property type="match status" value="2"/>
</dbReference>
<dbReference type="HAMAP" id="MF_00195">
    <property type="entry name" value="GTPase_Der"/>
    <property type="match status" value="1"/>
</dbReference>
<dbReference type="InterPro" id="IPR031166">
    <property type="entry name" value="G_ENGA"/>
</dbReference>
<dbReference type="InterPro" id="IPR006073">
    <property type="entry name" value="GTP-bd"/>
</dbReference>
<dbReference type="InterPro" id="IPR016484">
    <property type="entry name" value="GTPase_Der"/>
</dbReference>
<dbReference type="InterPro" id="IPR032859">
    <property type="entry name" value="KH_dom-like"/>
</dbReference>
<dbReference type="InterPro" id="IPR015946">
    <property type="entry name" value="KH_dom-like_a/b"/>
</dbReference>
<dbReference type="InterPro" id="IPR027417">
    <property type="entry name" value="P-loop_NTPase"/>
</dbReference>
<dbReference type="InterPro" id="IPR005225">
    <property type="entry name" value="Small_GTP-bd"/>
</dbReference>
<dbReference type="NCBIfam" id="TIGR03594">
    <property type="entry name" value="GTPase_EngA"/>
    <property type="match status" value="1"/>
</dbReference>
<dbReference type="NCBIfam" id="TIGR00231">
    <property type="entry name" value="small_GTP"/>
    <property type="match status" value="2"/>
</dbReference>
<dbReference type="PANTHER" id="PTHR43834">
    <property type="entry name" value="GTPASE DER"/>
    <property type="match status" value="1"/>
</dbReference>
<dbReference type="PANTHER" id="PTHR43834:SF6">
    <property type="entry name" value="GTPASE DER"/>
    <property type="match status" value="1"/>
</dbReference>
<dbReference type="Pfam" id="PF14714">
    <property type="entry name" value="KH_dom-like"/>
    <property type="match status" value="1"/>
</dbReference>
<dbReference type="Pfam" id="PF01926">
    <property type="entry name" value="MMR_HSR1"/>
    <property type="match status" value="2"/>
</dbReference>
<dbReference type="PIRSF" id="PIRSF006485">
    <property type="entry name" value="GTP-binding_EngA"/>
    <property type="match status" value="1"/>
</dbReference>
<dbReference type="PRINTS" id="PR00326">
    <property type="entry name" value="GTP1OBG"/>
</dbReference>
<dbReference type="SUPFAM" id="SSF52540">
    <property type="entry name" value="P-loop containing nucleoside triphosphate hydrolases"/>
    <property type="match status" value="2"/>
</dbReference>
<dbReference type="PROSITE" id="PS51712">
    <property type="entry name" value="G_ENGA"/>
    <property type="match status" value="2"/>
</dbReference>
<name>DER_STRPJ</name>
<proteinExistence type="inferred from homology"/>